<gene>
    <name evidence="1" type="primary">fusA</name>
    <name type="ordered locus">Cthe_2729</name>
</gene>
<organism>
    <name type="scientific">Acetivibrio thermocellus (strain ATCC 27405 / DSM 1237 / JCM 9322 / NBRC 103400 / NCIMB 10682 / NRRL B-4536 / VPI 7372)</name>
    <name type="common">Clostridium thermocellum</name>
    <dbReference type="NCBI Taxonomy" id="203119"/>
    <lineage>
        <taxon>Bacteria</taxon>
        <taxon>Bacillati</taxon>
        <taxon>Bacillota</taxon>
        <taxon>Clostridia</taxon>
        <taxon>Eubacteriales</taxon>
        <taxon>Oscillospiraceae</taxon>
        <taxon>Acetivibrio</taxon>
    </lineage>
</organism>
<evidence type="ECO:0000255" key="1">
    <source>
        <dbReference type="HAMAP-Rule" id="MF_00054"/>
    </source>
</evidence>
<proteinExistence type="inferred from homology"/>
<protein>
    <recommendedName>
        <fullName evidence="1">Elongation factor G</fullName>
        <shortName evidence="1">EF-G</shortName>
    </recommendedName>
</protein>
<comment type="function">
    <text evidence="1">Catalyzes the GTP-dependent ribosomal translocation step during translation elongation. During this step, the ribosome changes from the pre-translocational (PRE) to the post-translocational (POST) state as the newly formed A-site-bound peptidyl-tRNA and P-site-bound deacylated tRNA move to the P and E sites, respectively. Catalyzes the coordinated movement of the two tRNA molecules, the mRNA and conformational changes in the ribosome.</text>
</comment>
<comment type="subcellular location">
    <subcellularLocation>
        <location evidence="1">Cytoplasm</location>
    </subcellularLocation>
</comment>
<comment type="similarity">
    <text evidence="1">Belongs to the TRAFAC class translation factor GTPase superfamily. Classic translation factor GTPase family. EF-G/EF-2 subfamily.</text>
</comment>
<dbReference type="EMBL" id="CP000568">
    <property type="protein sequence ID" value="ABN53928.1"/>
    <property type="molecule type" value="Genomic_DNA"/>
</dbReference>
<dbReference type="RefSeq" id="WP_003515361.1">
    <property type="nucleotide sequence ID" value="NC_009012.1"/>
</dbReference>
<dbReference type="SMR" id="A3DIZ9"/>
<dbReference type="STRING" id="203119.Cthe_2729"/>
<dbReference type="GeneID" id="35805538"/>
<dbReference type="KEGG" id="cth:Cthe_2729"/>
<dbReference type="eggNOG" id="COG0480">
    <property type="taxonomic scope" value="Bacteria"/>
</dbReference>
<dbReference type="HOGENOM" id="CLU_002794_4_1_9"/>
<dbReference type="OrthoDB" id="9804431at2"/>
<dbReference type="Proteomes" id="UP000002145">
    <property type="component" value="Chromosome"/>
</dbReference>
<dbReference type="GO" id="GO:0005737">
    <property type="term" value="C:cytoplasm"/>
    <property type="evidence" value="ECO:0007669"/>
    <property type="project" value="UniProtKB-SubCell"/>
</dbReference>
<dbReference type="GO" id="GO:0005525">
    <property type="term" value="F:GTP binding"/>
    <property type="evidence" value="ECO:0007669"/>
    <property type="project" value="UniProtKB-UniRule"/>
</dbReference>
<dbReference type="GO" id="GO:0003924">
    <property type="term" value="F:GTPase activity"/>
    <property type="evidence" value="ECO:0007669"/>
    <property type="project" value="InterPro"/>
</dbReference>
<dbReference type="GO" id="GO:0003746">
    <property type="term" value="F:translation elongation factor activity"/>
    <property type="evidence" value="ECO:0007669"/>
    <property type="project" value="UniProtKB-UniRule"/>
</dbReference>
<dbReference type="GO" id="GO:0032790">
    <property type="term" value="P:ribosome disassembly"/>
    <property type="evidence" value="ECO:0007669"/>
    <property type="project" value="TreeGrafter"/>
</dbReference>
<dbReference type="CDD" id="cd01886">
    <property type="entry name" value="EF-G"/>
    <property type="match status" value="1"/>
</dbReference>
<dbReference type="CDD" id="cd16262">
    <property type="entry name" value="EFG_III"/>
    <property type="match status" value="1"/>
</dbReference>
<dbReference type="CDD" id="cd01434">
    <property type="entry name" value="EFG_mtEFG1_IV"/>
    <property type="match status" value="1"/>
</dbReference>
<dbReference type="CDD" id="cd03713">
    <property type="entry name" value="EFG_mtEFG_C"/>
    <property type="match status" value="1"/>
</dbReference>
<dbReference type="CDD" id="cd04088">
    <property type="entry name" value="EFG_mtEFG_II"/>
    <property type="match status" value="1"/>
</dbReference>
<dbReference type="FunFam" id="2.40.30.10:FF:000006">
    <property type="entry name" value="Elongation factor G"/>
    <property type="match status" value="1"/>
</dbReference>
<dbReference type="FunFam" id="3.30.230.10:FF:000003">
    <property type="entry name" value="Elongation factor G"/>
    <property type="match status" value="1"/>
</dbReference>
<dbReference type="FunFam" id="3.30.70.240:FF:000001">
    <property type="entry name" value="Elongation factor G"/>
    <property type="match status" value="1"/>
</dbReference>
<dbReference type="FunFam" id="3.30.70.870:FF:000001">
    <property type="entry name" value="Elongation factor G"/>
    <property type="match status" value="1"/>
</dbReference>
<dbReference type="FunFam" id="3.40.50.300:FF:000029">
    <property type="entry name" value="Elongation factor G"/>
    <property type="match status" value="1"/>
</dbReference>
<dbReference type="Gene3D" id="3.30.230.10">
    <property type="match status" value="1"/>
</dbReference>
<dbReference type="Gene3D" id="3.30.70.240">
    <property type="match status" value="1"/>
</dbReference>
<dbReference type="Gene3D" id="3.30.70.870">
    <property type="entry name" value="Elongation Factor G (Translational Gtpase), domain 3"/>
    <property type="match status" value="1"/>
</dbReference>
<dbReference type="Gene3D" id="3.40.50.300">
    <property type="entry name" value="P-loop containing nucleotide triphosphate hydrolases"/>
    <property type="match status" value="1"/>
</dbReference>
<dbReference type="Gene3D" id="2.40.30.10">
    <property type="entry name" value="Translation factors"/>
    <property type="match status" value="1"/>
</dbReference>
<dbReference type="HAMAP" id="MF_00054_B">
    <property type="entry name" value="EF_G_EF_2_B"/>
    <property type="match status" value="1"/>
</dbReference>
<dbReference type="InterPro" id="IPR041095">
    <property type="entry name" value="EFG_II"/>
</dbReference>
<dbReference type="InterPro" id="IPR009022">
    <property type="entry name" value="EFG_III"/>
</dbReference>
<dbReference type="InterPro" id="IPR035647">
    <property type="entry name" value="EFG_III/V"/>
</dbReference>
<dbReference type="InterPro" id="IPR047872">
    <property type="entry name" value="EFG_IV"/>
</dbReference>
<dbReference type="InterPro" id="IPR035649">
    <property type="entry name" value="EFG_V"/>
</dbReference>
<dbReference type="InterPro" id="IPR000640">
    <property type="entry name" value="EFG_V-like"/>
</dbReference>
<dbReference type="InterPro" id="IPR004161">
    <property type="entry name" value="EFTu-like_2"/>
</dbReference>
<dbReference type="InterPro" id="IPR031157">
    <property type="entry name" value="G_TR_CS"/>
</dbReference>
<dbReference type="InterPro" id="IPR027417">
    <property type="entry name" value="P-loop_NTPase"/>
</dbReference>
<dbReference type="InterPro" id="IPR020568">
    <property type="entry name" value="Ribosomal_Su5_D2-typ_SF"/>
</dbReference>
<dbReference type="InterPro" id="IPR014721">
    <property type="entry name" value="Ribsml_uS5_D2-typ_fold_subgr"/>
</dbReference>
<dbReference type="InterPro" id="IPR005225">
    <property type="entry name" value="Small_GTP-bd"/>
</dbReference>
<dbReference type="InterPro" id="IPR000795">
    <property type="entry name" value="T_Tr_GTP-bd_dom"/>
</dbReference>
<dbReference type="InterPro" id="IPR009000">
    <property type="entry name" value="Transl_B-barrel_sf"/>
</dbReference>
<dbReference type="InterPro" id="IPR004540">
    <property type="entry name" value="Transl_elong_EFG/EF2"/>
</dbReference>
<dbReference type="InterPro" id="IPR005517">
    <property type="entry name" value="Transl_elong_EFG/EF2_IV"/>
</dbReference>
<dbReference type="NCBIfam" id="TIGR00484">
    <property type="entry name" value="EF-G"/>
    <property type="match status" value="1"/>
</dbReference>
<dbReference type="NCBIfam" id="NF009379">
    <property type="entry name" value="PRK12740.1-3"/>
    <property type="match status" value="1"/>
</dbReference>
<dbReference type="NCBIfam" id="NF009381">
    <property type="entry name" value="PRK12740.1-5"/>
    <property type="match status" value="1"/>
</dbReference>
<dbReference type="NCBIfam" id="NF009891">
    <property type="entry name" value="PRK13351.1-1"/>
    <property type="match status" value="1"/>
</dbReference>
<dbReference type="NCBIfam" id="TIGR00231">
    <property type="entry name" value="small_GTP"/>
    <property type="match status" value="1"/>
</dbReference>
<dbReference type="PANTHER" id="PTHR43261:SF1">
    <property type="entry name" value="RIBOSOME-RELEASING FACTOR 2, MITOCHONDRIAL"/>
    <property type="match status" value="1"/>
</dbReference>
<dbReference type="PANTHER" id="PTHR43261">
    <property type="entry name" value="TRANSLATION ELONGATION FACTOR G-RELATED"/>
    <property type="match status" value="1"/>
</dbReference>
<dbReference type="Pfam" id="PF00679">
    <property type="entry name" value="EFG_C"/>
    <property type="match status" value="1"/>
</dbReference>
<dbReference type="Pfam" id="PF14492">
    <property type="entry name" value="EFG_III"/>
    <property type="match status" value="1"/>
</dbReference>
<dbReference type="Pfam" id="PF03764">
    <property type="entry name" value="EFG_IV"/>
    <property type="match status" value="1"/>
</dbReference>
<dbReference type="Pfam" id="PF00009">
    <property type="entry name" value="GTP_EFTU"/>
    <property type="match status" value="1"/>
</dbReference>
<dbReference type="Pfam" id="PF03144">
    <property type="entry name" value="GTP_EFTU_D2"/>
    <property type="match status" value="1"/>
</dbReference>
<dbReference type="PRINTS" id="PR00315">
    <property type="entry name" value="ELONGATNFCT"/>
</dbReference>
<dbReference type="SMART" id="SM00838">
    <property type="entry name" value="EFG_C"/>
    <property type="match status" value="1"/>
</dbReference>
<dbReference type="SMART" id="SM00889">
    <property type="entry name" value="EFG_IV"/>
    <property type="match status" value="1"/>
</dbReference>
<dbReference type="SUPFAM" id="SSF54980">
    <property type="entry name" value="EF-G C-terminal domain-like"/>
    <property type="match status" value="2"/>
</dbReference>
<dbReference type="SUPFAM" id="SSF52540">
    <property type="entry name" value="P-loop containing nucleoside triphosphate hydrolases"/>
    <property type="match status" value="1"/>
</dbReference>
<dbReference type="SUPFAM" id="SSF54211">
    <property type="entry name" value="Ribosomal protein S5 domain 2-like"/>
    <property type="match status" value="1"/>
</dbReference>
<dbReference type="SUPFAM" id="SSF50447">
    <property type="entry name" value="Translation proteins"/>
    <property type="match status" value="1"/>
</dbReference>
<dbReference type="PROSITE" id="PS00301">
    <property type="entry name" value="G_TR_1"/>
    <property type="match status" value="1"/>
</dbReference>
<dbReference type="PROSITE" id="PS51722">
    <property type="entry name" value="G_TR_2"/>
    <property type="match status" value="1"/>
</dbReference>
<sequence>MPRQFSLENTRNIGIMAHIDAGKTTTTERILFYTGRVHKIGETHEGSATMDWMEQEQERGITITSAATTAQWKGTRINIIDTPGHVDFTVEVERSLRVLDGAVAVFCAKGGVEPQSETVWRQADKYKVPRMAYVNKMDIMGADFFNCIKMMKERLQANPVPIQLPIGKEDNFQGIIDLIEMKAYYYMDDLGKVIEQRDIPEDMRELAEEYRTNLLENVAEYDEELMMKYLEGEEITEAEIKAALRKGTIAVKAIPVLCGSSYKNKGVQRLLDAIVDYMPSPVDIEAIKGVSVDGETEIERHASDDEPFSALAFKIMSDPYVGKLCFFRVYSGKLSSGSYVLNATKGKRERIGRLLMMHANHREEVDMVYAGDIAAAVGLKETTTGDTLCDEANPVILESMNFPEPVIHVAIEPKTKAGQEKMALALQKLAEEDPTFRTYTDQETGQTIIAGMGELHLEIIVDRLLREFKVEANVGNPQVAYKETIRKSVKSEGKYIRQSGGKGQYGHCWIEIEPKERGTGYEFVNKIVGGVIPKEYIPAVDAGIQSAMNNGVLAGYPVVDVKVTLYDGSYHEVDSSEMAFKVAASMAFKEGMKKADPVILEPIMKVVVTVPEDYMGDVIGDLNSRRGRIEGMEARAGAQVIHAYVPLAEMFGYATALRSRSQGRGVFSMEISHFEEVPKNIQEQIISGRAKNNSSDE</sequence>
<name>EFG_ACET2</name>
<feature type="chain" id="PRO_1000008817" description="Elongation factor G">
    <location>
        <begin position="1"/>
        <end position="697"/>
    </location>
</feature>
<feature type="domain" description="tr-type G">
    <location>
        <begin position="8"/>
        <end position="282"/>
    </location>
</feature>
<feature type="binding site" evidence="1">
    <location>
        <begin position="17"/>
        <end position="24"/>
    </location>
    <ligand>
        <name>GTP</name>
        <dbReference type="ChEBI" id="CHEBI:37565"/>
    </ligand>
</feature>
<feature type="binding site" evidence="1">
    <location>
        <begin position="81"/>
        <end position="85"/>
    </location>
    <ligand>
        <name>GTP</name>
        <dbReference type="ChEBI" id="CHEBI:37565"/>
    </ligand>
</feature>
<feature type="binding site" evidence="1">
    <location>
        <begin position="135"/>
        <end position="138"/>
    </location>
    <ligand>
        <name>GTP</name>
        <dbReference type="ChEBI" id="CHEBI:37565"/>
    </ligand>
</feature>
<keyword id="KW-0963">Cytoplasm</keyword>
<keyword id="KW-0251">Elongation factor</keyword>
<keyword id="KW-0342">GTP-binding</keyword>
<keyword id="KW-0547">Nucleotide-binding</keyword>
<keyword id="KW-0648">Protein biosynthesis</keyword>
<keyword id="KW-1185">Reference proteome</keyword>
<accession>A3DIZ9</accession>
<reference key="1">
    <citation type="submission" date="2007-02" db="EMBL/GenBank/DDBJ databases">
        <title>Complete sequence of Clostridium thermocellum ATCC 27405.</title>
        <authorList>
            <consortium name="US DOE Joint Genome Institute"/>
            <person name="Copeland A."/>
            <person name="Lucas S."/>
            <person name="Lapidus A."/>
            <person name="Barry K."/>
            <person name="Detter J.C."/>
            <person name="Glavina del Rio T."/>
            <person name="Hammon N."/>
            <person name="Israni S."/>
            <person name="Dalin E."/>
            <person name="Tice H."/>
            <person name="Pitluck S."/>
            <person name="Chertkov O."/>
            <person name="Brettin T."/>
            <person name="Bruce D."/>
            <person name="Han C."/>
            <person name="Tapia R."/>
            <person name="Gilna P."/>
            <person name="Schmutz J."/>
            <person name="Larimer F."/>
            <person name="Land M."/>
            <person name="Hauser L."/>
            <person name="Kyrpides N."/>
            <person name="Mikhailova N."/>
            <person name="Wu J.H.D."/>
            <person name="Newcomb M."/>
            <person name="Richardson P."/>
        </authorList>
    </citation>
    <scope>NUCLEOTIDE SEQUENCE [LARGE SCALE GENOMIC DNA]</scope>
    <source>
        <strain>ATCC 27405 / DSM 1237 / JCM 9322 / NBRC 103400 / NCIMB 10682 / NRRL B-4536 / VPI 7372</strain>
    </source>
</reference>